<protein>
    <recommendedName>
        <fullName evidence="1">Nucleotide-binding protein BAV3158</fullName>
    </recommendedName>
</protein>
<dbReference type="EMBL" id="AM167904">
    <property type="protein sequence ID" value="CAJ50768.1"/>
    <property type="molecule type" value="Genomic_DNA"/>
</dbReference>
<dbReference type="RefSeq" id="WP_012418796.1">
    <property type="nucleotide sequence ID" value="NC_010645.1"/>
</dbReference>
<dbReference type="SMR" id="Q2KU92"/>
<dbReference type="STRING" id="360910.BAV3158"/>
<dbReference type="GeneID" id="92933585"/>
<dbReference type="KEGG" id="bav:BAV3158"/>
<dbReference type="eggNOG" id="COG1660">
    <property type="taxonomic scope" value="Bacteria"/>
</dbReference>
<dbReference type="HOGENOM" id="CLU_059558_1_1_4"/>
<dbReference type="OrthoDB" id="9784461at2"/>
<dbReference type="Proteomes" id="UP000001977">
    <property type="component" value="Chromosome"/>
</dbReference>
<dbReference type="GO" id="GO:0005524">
    <property type="term" value="F:ATP binding"/>
    <property type="evidence" value="ECO:0007669"/>
    <property type="project" value="UniProtKB-UniRule"/>
</dbReference>
<dbReference type="GO" id="GO:0005525">
    <property type="term" value="F:GTP binding"/>
    <property type="evidence" value="ECO:0007669"/>
    <property type="project" value="UniProtKB-UniRule"/>
</dbReference>
<dbReference type="Gene3D" id="3.40.50.300">
    <property type="entry name" value="P-loop containing nucleotide triphosphate hydrolases"/>
    <property type="match status" value="1"/>
</dbReference>
<dbReference type="HAMAP" id="MF_00636">
    <property type="entry name" value="RapZ_like"/>
    <property type="match status" value="1"/>
</dbReference>
<dbReference type="InterPro" id="IPR027417">
    <property type="entry name" value="P-loop_NTPase"/>
</dbReference>
<dbReference type="InterPro" id="IPR005337">
    <property type="entry name" value="RapZ-like"/>
</dbReference>
<dbReference type="InterPro" id="IPR053930">
    <property type="entry name" value="RapZ-like_N"/>
</dbReference>
<dbReference type="InterPro" id="IPR053931">
    <property type="entry name" value="RapZ_C"/>
</dbReference>
<dbReference type="NCBIfam" id="NF003828">
    <property type="entry name" value="PRK05416.1"/>
    <property type="match status" value="1"/>
</dbReference>
<dbReference type="PANTHER" id="PTHR30448">
    <property type="entry name" value="RNASE ADAPTER PROTEIN RAPZ"/>
    <property type="match status" value="1"/>
</dbReference>
<dbReference type="PANTHER" id="PTHR30448:SF0">
    <property type="entry name" value="RNASE ADAPTER PROTEIN RAPZ"/>
    <property type="match status" value="1"/>
</dbReference>
<dbReference type="Pfam" id="PF22740">
    <property type="entry name" value="PapZ_C"/>
    <property type="match status" value="1"/>
</dbReference>
<dbReference type="Pfam" id="PF03668">
    <property type="entry name" value="RapZ-like_N"/>
    <property type="match status" value="1"/>
</dbReference>
<dbReference type="PIRSF" id="PIRSF005052">
    <property type="entry name" value="P-loopkin"/>
    <property type="match status" value="1"/>
</dbReference>
<dbReference type="SUPFAM" id="SSF52540">
    <property type="entry name" value="P-loop containing nucleoside triphosphate hydrolases"/>
    <property type="match status" value="1"/>
</dbReference>
<organism>
    <name type="scientific">Bordetella avium (strain 197N)</name>
    <dbReference type="NCBI Taxonomy" id="360910"/>
    <lineage>
        <taxon>Bacteria</taxon>
        <taxon>Pseudomonadati</taxon>
        <taxon>Pseudomonadota</taxon>
        <taxon>Betaproteobacteria</taxon>
        <taxon>Burkholderiales</taxon>
        <taxon>Alcaligenaceae</taxon>
        <taxon>Bordetella</taxon>
    </lineage>
</organism>
<reference key="1">
    <citation type="journal article" date="2006" name="J. Bacteriol.">
        <title>Comparison of the genome sequence of the poultry pathogen Bordetella avium with those of B. bronchiseptica, B. pertussis, and B. parapertussis reveals extensive diversity in surface structures associated with host interaction.</title>
        <authorList>
            <person name="Sebaihia M."/>
            <person name="Preston A."/>
            <person name="Maskell D.J."/>
            <person name="Kuzmiak H."/>
            <person name="Connell T.D."/>
            <person name="King N.D."/>
            <person name="Orndorff P.E."/>
            <person name="Miyamoto D.M."/>
            <person name="Thomson N.R."/>
            <person name="Harris D."/>
            <person name="Goble A."/>
            <person name="Lord A."/>
            <person name="Murphy L."/>
            <person name="Quail M.A."/>
            <person name="Rutter S."/>
            <person name="Squares R."/>
            <person name="Squares S."/>
            <person name="Woodward J."/>
            <person name="Parkhill J."/>
            <person name="Temple L.M."/>
        </authorList>
    </citation>
    <scope>NUCLEOTIDE SEQUENCE [LARGE SCALE GENOMIC DNA]</scope>
    <source>
        <strain>197N</strain>
    </source>
</reference>
<gene>
    <name type="ordered locus">BAV3158</name>
</gene>
<accession>Q2KU92</accession>
<evidence type="ECO:0000255" key="1">
    <source>
        <dbReference type="HAMAP-Rule" id="MF_00636"/>
    </source>
</evidence>
<comment type="function">
    <text evidence="1">Displays ATPase and GTPase activities.</text>
</comment>
<comment type="similarity">
    <text evidence="1">Belongs to the RapZ-like family.</text>
</comment>
<sequence length="290" mass="32678">MLRVVLITGISGSGKSVALRMLEDSGFTCVDNLPLRFLTEFVAVSHDDGMERVAVAIDVRSPGELAELPNVITALRAMGTQLSVVFLDASTETLAQRYSESRRRHPLTDRASRGEKSASLTDCIALERELLAPLRDQEHVIDTTDLTPGQLRSWIRELIDADRAPLVLTFQSFAYKRGVPNDADLVFDVRCLPNPYYDRNLRPLTGRDQPVADWLAGFEIVQRMIDDIDGFIRRWLPQYTLDTRNYLTVAVGCTGGQHRSVYVVEELARRFSEHDPLLVRHRTQLPDESA</sequence>
<keyword id="KW-0067">ATP-binding</keyword>
<keyword id="KW-0342">GTP-binding</keyword>
<keyword id="KW-0547">Nucleotide-binding</keyword>
<keyword id="KW-1185">Reference proteome</keyword>
<proteinExistence type="inferred from homology"/>
<name>Y3158_BORA1</name>
<feature type="chain" id="PRO_0000258945" description="Nucleotide-binding protein BAV3158">
    <location>
        <begin position="1"/>
        <end position="290"/>
    </location>
</feature>
<feature type="binding site" evidence="1">
    <location>
        <begin position="9"/>
        <end position="16"/>
    </location>
    <ligand>
        <name>ATP</name>
        <dbReference type="ChEBI" id="CHEBI:30616"/>
    </ligand>
</feature>
<feature type="binding site" evidence="1">
    <location>
        <begin position="58"/>
        <end position="61"/>
    </location>
    <ligand>
        <name>GTP</name>
        <dbReference type="ChEBI" id="CHEBI:37565"/>
    </ligand>
</feature>